<reference key="1">
    <citation type="journal article" date="2010" name="J. Bacteriol.">
        <title>Genome sequence of the deep-rooted Yersinia pestis strain Angola reveals new insights into the evolution and pangenome of the plague bacterium.</title>
        <authorList>
            <person name="Eppinger M."/>
            <person name="Worsham P.L."/>
            <person name="Nikolich M.P."/>
            <person name="Riley D.R."/>
            <person name="Sebastian Y."/>
            <person name="Mou S."/>
            <person name="Achtman M."/>
            <person name="Lindler L.E."/>
            <person name="Ravel J."/>
        </authorList>
    </citation>
    <scope>NUCLEOTIDE SEQUENCE [LARGE SCALE GENOMIC DNA]</scope>
    <source>
        <strain>Angola</strain>
    </source>
</reference>
<comment type="function">
    <text evidence="1">Produces ATP from ADP in the presence of a proton gradient across the membrane. The catalytic sites are hosted primarily by the beta subunits.</text>
</comment>
<comment type="catalytic activity">
    <reaction evidence="1">
        <text>ATP + H2O + 4 H(+)(in) = ADP + phosphate + 5 H(+)(out)</text>
        <dbReference type="Rhea" id="RHEA:57720"/>
        <dbReference type="ChEBI" id="CHEBI:15377"/>
        <dbReference type="ChEBI" id="CHEBI:15378"/>
        <dbReference type="ChEBI" id="CHEBI:30616"/>
        <dbReference type="ChEBI" id="CHEBI:43474"/>
        <dbReference type="ChEBI" id="CHEBI:456216"/>
        <dbReference type="EC" id="7.1.2.2"/>
    </reaction>
</comment>
<comment type="subunit">
    <text evidence="1">F-type ATPases have 2 components, CF(1) - the catalytic core - and CF(0) - the membrane proton channel. CF(1) has five subunits: alpha(3), beta(3), gamma(1), delta(1), epsilon(1). CF(0) has three main subunits: a(1), b(2) and c(9-12). The alpha and beta chains form an alternating ring which encloses part of the gamma chain. CF(1) is attached to CF(0) by a central stalk formed by the gamma and epsilon chains, while a peripheral stalk is formed by the delta and b chains.</text>
</comment>
<comment type="subcellular location">
    <subcellularLocation>
        <location evidence="1">Cell inner membrane</location>
        <topology evidence="1">Peripheral membrane protein</topology>
    </subcellularLocation>
</comment>
<comment type="similarity">
    <text evidence="1">Belongs to the ATPase alpha/beta chains family.</text>
</comment>
<organism>
    <name type="scientific">Yersinia pestis bv. Antiqua (strain Angola)</name>
    <dbReference type="NCBI Taxonomy" id="349746"/>
    <lineage>
        <taxon>Bacteria</taxon>
        <taxon>Pseudomonadati</taxon>
        <taxon>Pseudomonadota</taxon>
        <taxon>Gammaproteobacteria</taxon>
        <taxon>Enterobacterales</taxon>
        <taxon>Yersiniaceae</taxon>
        <taxon>Yersinia</taxon>
    </lineage>
</organism>
<feature type="chain" id="PRO_1000143567" description="ATP synthase subunit beta">
    <location>
        <begin position="1"/>
        <end position="460"/>
    </location>
</feature>
<feature type="binding site" evidence="1">
    <location>
        <begin position="150"/>
        <end position="157"/>
    </location>
    <ligand>
        <name>ATP</name>
        <dbReference type="ChEBI" id="CHEBI:30616"/>
    </ligand>
</feature>
<keyword id="KW-0066">ATP synthesis</keyword>
<keyword id="KW-0067">ATP-binding</keyword>
<keyword id="KW-0997">Cell inner membrane</keyword>
<keyword id="KW-1003">Cell membrane</keyword>
<keyword id="KW-0139">CF(1)</keyword>
<keyword id="KW-0375">Hydrogen ion transport</keyword>
<keyword id="KW-0406">Ion transport</keyword>
<keyword id="KW-0472">Membrane</keyword>
<keyword id="KW-0547">Nucleotide-binding</keyword>
<keyword id="KW-1278">Translocase</keyword>
<keyword id="KW-0813">Transport</keyword>
<evidence type="ECO:0000255" key="1">
    <source>
        <dbReference type="HAMAP-Rule" id="MF_01347"/>
    </source>
</evidence>
<accession>A9R5T9</accession>
<proteinExistence type="inferred from homology"/>
<protein>
    <recommendedName>
        <fullName evidence="1">ATP synthase subunit beta</fullName>
        <ecNumber evidence="1">7.1.2.2</ecNumber>
    </recommendedName>
    <alternativeName>
        <fullName evidence="1">ATP synthase F1 sector subunit beta</fullName>
    </alternativeName>
    <alternativeName>
        <fullName evidence="1">F-ATPase subunit beta</fullName>
    </alternativeName>
</protein>
<sequence length="460" mass="50127">MATGKIIQVIGAVVDVEFPQDAVPKVYNALEVEGTTEKLVLEVQQQLGGGVVRCIAMGSSDGLSRGLKVTNLEHPIEVPVGKATLGRIMNVLGEPIDMKGPIGEEERWAIHREAPSYEELASSQDLLETGIKVMDLICPFAKGGKVGLFGGAGVGKTVNMMELIRNIAIEHSGYSVFAGVGERTREGNDFYHEMTDSNVLDKVSLVYGQMNEPPGNRLRVALTGLTMAEKFRDEGRDVLLFIDNIYRYTLAGTEVSALLGRMPSAVGYQPTLAEEMGVLQERITSTKTGSITSVQAVYVPADDLTDPSPATTFAHLDATVVLSRQIASLGIYPAVDPLDSTSRQLDPLVVGQEHYDVARGVQSILQRYQELKDIIAILGMDELSEDDKLVVSRARKIQRFLSQPFFVAEVFTGSPGKFVSLKDTIRGFKGIMNGDYDHLPEQAFYMVGTIEEAVEKAKKL</sequence>
<dbReference type="EC" id="7.1.2.2" evidence="1"/>
<dbReference type="EMBL" id="CP000901">
    <property type="protein sequence ID" value="ABX87835.1"/>
    <property type="molecule type" value="Genomic_DNA"/>
</dbReference>
<dbReference type="RefSeq" id="WP_002220753.1">
    <property type="nucleotide sequence ID" value="NZ_CP009935.1"/>
</dbReference>
<dbReference type="SMR" id="A9R5T9"/>
<dbReference type="GeneID" id="57974603"/>
<dbReference type="KEGG" id="ypg:YpAngola_A4202"/>
<dbReference type="PATRIC" id="fig|349746.12.peg.939"/>
<dbReference type="GO" id="GO:0005886">
    <property type="term" value="C:plasma membrane"/>
    <property type="evidence" value="ECO:0007669"/>
    <property type="project" value="UniProtKB-SubCell"/>
</dbReference>
<dbReference type="GO" id="GO:0045259">
    <property type="term" value="C:proton-transporting ATP synthase complex"/>
    <property type="evidence" value="ECO:0007669"/>
    <property type="project" value="UniProtKB-KW"/>
</dbReference>
<dbReference type="GO" id="GO:0005524">
    <property type="term" value="F:ATP binding"/>
    <property type="evidence" value="ECO:0007669"/>
    <property type="project" value="UniProtKB-UniRule"/>
</dbReference>
<dbReference type="GO" id="GO:0016887">
    <property type="term" value="F:ATP hydrolysis activity"/>
    <property type="evidence" value="ECO:0007669"/>
    <property type="project" value="InterPro"/>
</dbReference>
<dbReference type="GO" id="GO:0046933">
    <property type="term" value="F:proton-transporting ATP synthase activity, rotational mechanism"/>
    <property type="evidence" value="ECO:0007669"/>
    <property type="project" value="UniProtKB-UniRule"/>
</dbReference>
<dbReference type="CDD" id="cd18110">
    <property type="entry name" value="ATP-synt_F1_beta_C"/>
    <property type="match status" value="1"/>
</dbReference>
<dbReference type="CDD" id="cd18115">
    <property type="entry name" value="ATP-synt_F1_beta_N"/>
    <property type="match status" value="1"/>
</dbReference>
<dbReference type="CDD" id="cd01133">
    <property type="entry name" value="F1-ATPase_beta_CD"/>
    <property type="match status" value="1"/>
</dbReference>
<dbReference type="FunFam" id="1.10.1140.10:FF:000001">
    <property type="entry name" value="ATP synthase subunit beta"/>
    <property type="match status" value="1"/>
</dbReference>
<dbReference type="FunFam" id="2.40.10.170:FF:000003">
    <property type="entry name" value="ATP synthase subunit beta"/>
    <property type="match status" value="1"/>
</dbReference>
<dbReference type="FunFam" id="3.40.50.300:FF:000004">
    <property type="entry name" value="ATP synthase subunit beta"/>
    <property type="match status" value="1"/>
</dbReference>
<dbReference type="Gene3D" id="2.40.10.170">
    <property type="match status" value="1"/>
</dbReference>
<dbReference type="Gene3D" id="1.10.1140.10">
    <property type="entry name" value="Bovine Mitochondrial F1-atpase, Atp Synthase Beta Chain, Chain D, domain 3"/>
    <property type="match status" value="1"/>
</dbReference>
<dbReference type="Gene3D" id="3.40.50.300">
    <property type="entry name" value="P-loop containing nucleotide triphosphate hydrolases"/>
    <property type="match status" value="1"/>
</dbReference>
<dbReference type="HAMAP" id="MF_01347">
    <property type="entry name" value="ATP_synth_beta_bact"/>
    <property type="match status" value="1"/>
</dbReference>
<dbReference type="InterPro" id="IPR003593">
    <property type="entry name" value="AAA+_ATPase"/>
</dbReference>
<dbReference type="InterPro" id="IPR055190">
    <property type="entry name" value="ATP-synt_VA_C"/>
</dbReference>
<dbReference type="InterPro" id="IPR005722">
    <property type="entry name" value="ATP_synth_F1_bsu"/>
</dbReference>
<dbReference type="InterPro" id="IPR020003">
    <property type="entry name" value="ATPase_a/bsu_AS"/>
</dbReference>
<dbReference type="InterPro" id="IPR050053">
    <property type="entry name" value="ATPase_alpha/beta_chains"/>
</dbReference>
<dbReference type="InterPro" id="IPR004100">
    <property type="entry name" value="ATPase_F1/V1/A1_a/bsu_N"/>
</dbReference>
<dbReference type="InterPro" id="IPR036121">
    <property type="entry name" value="ATPase_F1/V1/A1_a/bsu_N_sf"/>
</dbReference>
<dbReference type="InterPro" id="IPR000194">
    <property type="entry name" value="ATPase_F1/V1/A1_a/bsu_nucl-bd"/>
</dbReference>
<dbReference type="InterPro" id="IPR024034">
    <property type="entry name" value="ATPase_F1/V1_b/a_C"/>
</dbReference>
<dbReference type="InterPro" id="IPR027417">
    <property type="entry name" value="P-loop_NTPase"/>
</dbReference>
<dbReference type="NCBIfam" id="TIGR01039">
    <property type="entry name" value="atpD"/>
    <property type="match status" value="1"/>
</dbReference>
<dbReference type="PANTHER" id="PTHR15184">
    <property type="entry name" value="ATP SYNTHASE"/>
    <property type="match status" value="1"/>
</dbReference>
<dbReference type="PANTHER" id="PTHR15184:SF71">
    <property type="entry name" value="ATP SYNTHASE SUBUNIT BETA, MITOCHONDRIAL"/>
    <property type="match status" value="1"/>
</dbReference>
<dbReference type="Pfam" id="PF00006">
    <property type="entry name" value="ATP-synt_ab"/>
    <property type="match status" value="1"/>
</dbReference>
<dbReference type="Pfam" id="PF02874">
    <property type="entry name" value="ATP-synt_ab_N"/>
    <property type="match status" value="1"/>
</dbReference>
<dbReference type="Pfam" id="PF22919">
    <property type="entry name" value="ATP-synt_VA_C"/>
    <property type="match status" value="1"/>
</dbReference>
<dbReference type="SMART" id="SM00382">
    <property type="entry name" value="AAA"/>
    <property type="match status" value="1"/>
</dbReference>
<dbReference type="SUPFAM" id="SSF47917">
    <property type="entry name" value="C-terminal domain of alpha and beta subunits of F1 ATP synthase"/>
    <property type="match status" value="1"/>
</dbReference>
<dbReference type="SUPFAM" id="SSF50615">
    <property type="entry name" value="N-terminal domain of alpha and beta subunits of F1 ATP synthase"/>
    <property type="match status" value="1"/>
</dbReference>
<dbReference type="SUPFAM" id="SSF52540">
    <property type="entry name" value="P-loop containing nucleoside triphosphate hydrolases"/>
    <property type="match status" value="1"/>
</dbReference>
<dbReference type="PROSITE" id="PS00152">
    <property type="entry name" value="ATPASE_ALPHA_BETA"/>
    <property type="match status" value="1"/>
</dbReference>
<gene>
    <name evidence="1" type="primary">atpD</name>
    <name type="ordered locus">YpAngola_A4202</name>
</gene>
<name>ATPB_YERPG</name>